<organism>
    <name type="scientific">Methanobrevibacter smithii (strain ATCC 35061 / DSM 861 / OCM 144 / PS)</name>
    <dbReference type="NCBI Taxonomy" id="420247"/>
    <lineage>
        <taxon>Archaea</taxon>
        <taxon>Methanobacteriati</taxon>
        <taxon>Methanobacteriota</taxon>
        <taxon>Methanomada group</taxon>
        <taxon>Methanobacteria</taxon>
        <taxon>Methanobacteriales</taxon>
        <taxon>Methanobacteriaceae</taxon>
        <taxon>Methanobrevibacter</taxon>
    </lineage>
</organism>
<keyword id="KW-0342">GTP-binding</keyword>
<keyword id="KW-0378">Hydrolase</keyword>
<keyword id="KW-0547">Nucleotide-binding</keyword>
<name>GCH3_METS3</name>
<evidence type="ECO:0000255" key="1">
    <source>
        <dbReference type="HAMAP-Rule" id="MF_00608"/>
    </source>
</evidence>
<gene>
    <name evidence="1" type="primary">gch3</name>
    <name type="ordered locus">Msm_0973</name>
</gene>
<proteinExistence type="inferred from homology"/>
<protein>
    <recommendedName>
        <fullName evidence="1">GTP cyclohydrolase III</fullName>
        <ecNumber evidence="1">3.5.4.29</ecNumber>
    </recommendedName>
</protein>
<accession>A5ULV0</accession>
<comment type="function">
    <text evidence="1">Catalyzes the formation of 2-amino-5-formylamino-6-ribofuranosylamino-4(3H)-pyrimidinone ribonucleotide monophosphate and inorganic phosphate from GTP. Also has an independent pyrophosphate phosphohydrolase activity.</text>
</comment>
<comment type="catalytic activity">
    <reaction evidence="1">
        <text>GTP + 3 H2O = 2-amino-5-formylamino-6-(5-phospho-D-ribosylamino)pyrimidin-4(3H)-one + 2 phosphate + 2 H(+)</text>
        <dbReference type="Rhea" id="RHEA:22468"/>
        <dbReference type="ChEBI" id="CHEBI:15377"/>
        <dbReference type="ChEBI" id="CHEBI:15378"/>
        <dbReference type="ChEBI" id="CHEBI:37565"/>
        <dbReference type="ChEBI" id="CHEBI:43474"/>
        <dbReference type="ChEBI" id="CHEBI:57258"/>
        <dbReference type="EC" id="3.5.4.29"/>
    </reaction>
</comment>
<comment type="similarity">
    <text evidence="1">Belongs to the archaeal-type GTP cyclohydrolase family.</text>
</comment>
<reference key="1">
    <citation type="journal article" date="2007" name="Proc. Natl. Acad. Sci. U.S.A.">
        <title>Genomic and metabolic adaptations of Methanobrevibacter smithii to the human gut.</title>
        <authorList>
            <person name="Samuel B.S."/>
            <person name="Hansen E.E."/>
            <person name="Manchester J.K."/>
            <person name="Coutinho P.M."/>
            <person name="Henrissat B."/>
            <person name="Fulton R."/>
            <person name="Latreille P."/>
            <person name="Kim K."/>
            <person name="Wilson R.K."/>
            <person name="Gordon J.I."/>
        </authorList>
    </citation>
    <scope>NUCLEOTIDE SEQUENCE [LARGE SCALE GENOMIC DNA]</scope>
    <source>
        <strain>ATCC 35061 / DSM 861 / OCM 144 / PS</strain>
    </source>
</reference>
<sequence>MIQMTLIQIDNYGPWTVTPRPRNESDLQILQAELYADLERQFANKKGLVFFTRFDNLLAVTNGIDEEDHLRIQRSIRNRYPITISMGVGAAETPHEAQKLATIALQKEGGAQSSKRKEILAIDSLAPADENNLVQAAHIDINSVTETLTDIESAFDTNFMVNKAQHYLMTKLIKKGALLFFIGGDNFMAPCNGLSEKEIEDILVEINDEIGIGLKAGIGVGRNMEDAAYMADLGLEEIRDHDNGMWTWVIEKEY</sequence>
<feature type="chain" id="PRO_1000056693" description="GTP cyclohydrolase III">
    <location>
        <begin position="1"/>
        <end position="254"/>
    </location>
</feature>
<dbReference type="EC" id="3.5.4.29" evidence="1"/>
<dbReference type="EMBL" id="CP000678">
    <property type="protein sequence ID" value="ABQ87178.1"/>
    <property type="molecule type" value="Genomic_DNA"/>
</dbReference>
<dbReference type="RefSeq" id="WP_004032962.1">
    <property type="nucleotide sequence ID" value="NZ_CP117965.1"/>
</dbReference>
<dbReference type="SMR" id="A5ULV0"/>
<dbReference type="STRING" id="420247.Msm_0973"/>
<dbReference type="EnsemblBacteria" id="ABQ87178">
    <property type="protein sequence ID" value="ABQ87178"/>
    <property type="gene ID" value="Msm_0973"/>
</dbReference>
<dbReference type="KEGG" id="msi:Msm_0973"/>
<dbReference type="PATRIC" id="fig|420247.28.peg.970"/>
<dbReference type="eggNOG" id="arCOG04202">
    <property type="taxonomic scope" value="Archaea"/>
</dbReference>
<dbReference type="HOGENOM" id="CLU_080076_0_0_2"/>
<dbReference type="Proteomes" id="UP000001992">
    <property type="component" value="Chromosome"/>
</dbReference>
<dbReference type="GO" id="GO:0005525">
    <property type="term" value="F:GTP binding"/>
    <property type="evidence" value="ECO:0007669"/>
    <property type="project" value="UniProtKB-KW"/>
</dbReference>
<dbReference type="GO" id="GO:0043740">
    <property type="term" value="F:GTP cyclohydrolase IIa activity"/>
    <property type="evidence" value="ECO:0007669"/>
    <property type="project" value="UniProtKB-EC"/>
</dbReference>
<dbReference type="GO" id="GO:0009058">
    <property type="term" value="P:biosynthetic process"/>
    <property type="evidence" value="ECO:0007669"/>
    <property type="project" value="InterPro"/>
</dbReference>
<dbReference type="Gene3D" id="3.30.70.270">
    <property type="match status" value="1"/>
</dbReference>
<dbReference type="Gene3D" id="3.30.70.1230">
    <property type="entry name" value="Nucleotide cyclase"/>
    <property type="match status" value="1"/>
</dbReference>
<dbReference type="HAMAP" id="MF_00608">
    <property type="entry name" value="GTP_cyclohydro_3"/>
    <property type="match status" value="1"/>
</dbReference>
<dbReference type="InterPro" id="IPR007839">
    <property type="entry name" value="GTP_CycHdrlase_3"/>
</dbReference>
<dbReference type="InterPro" id="IPR029787">
    <property type="entry name" value="Nucleotide_cyclase"/>
</dbReference>
<dbReference type="InterPro" id="IPR043128">
    <property type="entry name" value="Rev_trsase/Diguanyl_cyclase"/>
</dbReference>
<dbReference type="NCBIfam" id="NF002587">
    <property type="entry name" value="PRK02240.1"/>
    <property type="match status" value="1"/>
</dbReference>
<dbReference type="PANTHER" id="PTHR42202">
    <property type="entry name" value="GTP CYCLOHYDROLASE III"/>
    <property type="match status" value="1"/>
</dbReference>
<dbReference type="PANTHER" id="PTHR42202:SF1">
    <property type="entry name" value="GTP CYCLOHYDROLASE III"/>
    <property type="match status" value="1"/>
</dbReference>
<dbReference type="Pfam" id="PF05165">
    <property type="entry name" value="GCH_III"/>
    <property type="match status" value="1"/>
</dbReference>
<dbReference type="PIRSF" id="PIRSF009265">
    <property type="entry name" value="GTP_cyclohydro_3"/>
    <property type="match status" value="1"/>
</dbReference>